<feature type="chain" id="PRO_1000213295" description="Phosphoribosyl-ATP pyrophosphatase">
    <location>
        <begin position="1"/>
        <end position="94"/>
    </location>
</feature>
<sequence length="94" mass="10797">MSNEIVDKLYKVILDRIEKRPTGSYTAEIVNKGKAYVARKVGEESVETIVASLAENKERFISEVADLIYHLLVLMALEGVTPDDIYRELERRRK</sequence>
<accession>C3NER1</accession>
<proteinExistence type="inferred from homology"/>
<comment type="catalytic activity">
    <reaction evidence="1">
        <text>1-(5-phospho-beta-D-ribosyl)-ATP + H2O = 1-(5-phospho-beta-D-ribosyl)-5'-AMP + diphosphate + H(+)</text>
        <dbReference type="Rhea" id="RHEA:22828"/>
        <dbReference type="ChEBI" id="CHEBI:15377"/>
        <dbReference type="ChEBI" id="CHEBI:15378"/>
        <dbReference type="ChEBI" id="CHEBI:33019"/>
        <dbReference type="ChEBI" id="CHEBI:59457"/>
        <dbReference type="ChEBI" id="CHEBI:73183"/>
        <dbReference type="EC" id="3.6.1.31"/>
    </reaction>
</comment>
<comment type="pathway">
    <text evidence="1">Amino-acid biosynthesis; L-histidine biosynthesis; L-histidine from 5-phospho-alpha-D-ribose 1-diphosphate: step 2/9.</text>
</comment>
<comment type="subcellular location">
    <subcellularLocation>
        <location evidence="1">Cytoplasm</location>
    </subcellularLocation>
</comment>
<comment type="similarity">
    <text evidence="1">Belongs to the PRA-PH family.</text>
</comment>
<reference key="1">
    <citation type="journal article" date="2009" name="Proc. Natl. Acad. Sci. U.S.A.">
        <title>Biogeography of the Sulfolobus islandicus pan-genome.</title>
        <authorList>
            <person name="Reno M.L."/>
            <person name="Held N.L."/>
            <person name="Fields C.J."/>
            <person name="Burke P.V."/>
            <person name="Whitaker R.J."/>
        </authorList>
    </citation>
    <scope>NUCLEOTIDE SEQUENCE [LARGE SCALE GENOMIC DNA]</scope>
    <source>
        <strain>Y.G.57.14 / Yellowstone #1</strain>
    </source>
</reference>
<gene>
    <name evidence="1" type="primary">hisE</name>
    <name type="ordered locus">YG5714_1538</name>
</gene>
<name>HIS2_SACI7</name>
<dbReference type="EC" id="3.6.1.31" evidence="1"/>
<dbReference type="EMBL" id="CP001403">
    <property type="protein sequence ID" value="ACP45800.1"/>
    <property type="molecule type" value="Genomic_DNA"/>
</dbReference>
<dbReference type="RefSeq" id="WP_012711528.1">
    <property type="nucleotide sequence ID" value="NC_012622.1"/>
</dbReference>
<dbReference type="SMR" id="C3NER1"/>
<dbReference type="GeneID" id="84061845"/>
<dbReference type="KEGG" id="siy:YG5714_1538"/>
<dbReference type="HOGENOM" id="CLU_123337_0_0_2"/>
<dbReference type="UniPathway" id="UPA00031">
    <property type="reaction ID" value="UER00007"/>
</dbReference>
<dbReference type="Proteomes" id="UP000002308">
    <property type="component" value="Chromosome"/>
</dbReference>
<dbReference type="GO" id="GO:0005737">
    <property type="term" value="C:cytoplasm"/>
    <property type="evidence" value="ECO:0007669"/>
    <property type="project" value="UniProtKB-SubCell"/>
</dbReference>
<dbReference type="GO" id="GO:0005524">
    <property type="term" value="F:ATP binding"/>
    <property type="evidence" value="ECO:0007669"/>
    <property type="project" value="UniProtKB-KW"/>
</dbReference>
<dbReference type="GO" id="GO:0004636">
    <property type="term" value="F:phosphoribosyl-ATP diphosphatase activity"/>
    <property type="evidence" value="ECO:0007669"/>
    <property type="project" value="UniProtKB-UniRule"/>
</dbReference>
<dbReference type="GO" id="GO:0000105">
    <property type="term" value="P:L-histidine biosynthetic process"/>
    <property type="evidence" value="ECO:0007669"/>
    <property type="project" value="UniProtKB-UniRule"/>
</dbReference>
<dbReference type="CDD" id="cd11534">
    <property type="entry name" value="NTP-PPase_HisIE_like"/>
    <property type="match status" value="1"/>
</dbReference>
<dbReference type="Gene3D" id="1.10.287.1080">
    <property type="entry name" value="MazG-like"/>
    <property type="match status" value="1"/>
</dbReference>
<dbReference type="HAMAP" id="MF_01020">
    <property type="entry name" value="HisE"/>
    <property type="match status" value="1"/>
</dbReference>
<dbReference type="InterPro" id="IPR008179">
    <property type="entry name" value="HisE"/>
</dbReference>
<dbReference type="InterPro" id="IPR021130">
    <property type="entry name" value="PRib-ATP_PPHydrolase-like"/>
</dbReference>
<dbReference type="NCBIfam" id="TIGR03188">
    <property type="entry name" value="histidine_hisI"/>
    <property type="match status" value="1"/>
</dbReference>
<dbReference type="PANTHER" id="PTHR42945">
    <property type="entry name" value="HISTIDINE BIOSYNTHESIS BIFUNCTIONAL PROTEIN"/>
    <property type="match status" value="1"/>
</dbReference>
<dbReference type="PANTHER" id="PTHR42945:SF1">
    <property type="entry name" value="HISTIDINE BIOSYNTHESIS BIFUNCTIONAL PROTEIN HIS7"/>
    <property type="match status" value="1"/>
</dbReference>
<dbReference type="Pfam" id="PF01503">
    <property type="entry name" value="PRA-PH"/>
    <property type="match status" value="1"/>
</dbReference>
<dbReference type="SUPFAM" id="SSF101386">
    <property type="entry name" value="all-alpha NTP pyrophosphatases"/>
    <property type="match status" value="1"/>
</dbReference>
<evidence type="ECO:0000255" key="1">
    <source>
        <dbReference type="HAMAP-Rule" id="MF_01020"/>
    </source>
</evidence>
<organism>
    <name type="scientific">Saccharolobus islandicus (strain Y.G.57.14 / Yellowstone #1)</name>
    <name type="common">Sulfolobus islandicus</name>
    <dbReference type="NCBI Taxonomy" id="439386"/>
    <lineage>
        <taxon>Archaea</taxon>
        <taxon>Thermoproteota</taxon>
        <taxon>Thermoprotei</taxon>
        <taxon>Sulfolobales</taxon>
        <taxon>Sulfolobaceae</taxon>
        <taxon>Saccharolobus</taxon>
    </lineage>
</organism>
<protein>
    <recommendedName>
        <fullName evidence="1">Phosphoribosyl-ATP pyrophosphatase</fullName>
        <shortName evidence="1">PRA-PH</shortName>
        <ecNumber evidence="1">3.6.1.31</ecNumber>
    </recommendedName>
</protein>
<keyword id="KW-0028">Amino-acid biosynthesis</keyword>
<keyword id="KW-0067">ATP-binding</keyword>
<keyword id="KW-0963">Cytoplasm</keyword>
<keyword id="KW-0368">Histidine biosynthesis</keyword>
<keyword id="KW-0378">Hydrolase</keyword>
<keyword id="KW-0547">Nucleotide-binding</keyword>